<feature type="chain" id="PRO_1000025724" description="Cell division protein FtsB">
    <location>
        <begin position="1"/>
        <end position="99"/>
    </location>
</feature>
<feature type="topological domain" description="Cytoplasmic" evidence="1">
    <location>
        <begin position="1"/>
        <end position="3"/>
    </location>
</feature>
<feature type="transmembrane region" description="Helical" evidence="1">
    <location>
        <begin position="4"/>
        <end position="21"/>
    </location>
</feature>
<feature type="topological domain" description="Periplasmic" evidence="1">
    <location>
        <begin position="22"/>
        <end position="99"/>
    </location>
</feature>
<feature type="coiled-coil region" evidence="1">
    <location>
        <begin position="31"/>
        <end position="73"/>
    </location>
</feature>
<protein>
    <recommendedName>
        <fullName evidence="1">Cell division protein FtsB</fullName>
    </recommendedName>
</protein>
<dbReference type="EMBL" id="CP000446">
    <property type="protein sequence ID" value="ABI38196.1"/>
    <property type="molecule type" value="Genomic_DNA"/>
</dbReference>
<dbReference type="SMR" id="Q0HL71"/>
<dbReference type="KEGG" id="she:Shewmr4_1116"/>
<dbReference type="HOGENOM" id="CLU_134863_5_2_6"/>
<dbReference type="GO" id="GO:0032153">
    <property type="term" value="C:cell division site"/>
    <property type="evidence" value="ECO:0007669"/>
    <property type="project" value="UniProtKB-UniRule"/>
</dbReference>
<dbReference type="GO" id="GO:0030428">
    <property type="term" value="C:cell septum"/>
    <property type="evidence" value="ECO:0007669"/>
    <property type="project" value="TreeGrafter"/>
</dbReference>
<dbReference type="GO" id="GO:0005886">
    <property type="term" value="C:plasma membrane"/>
    <property type="evidence" value="ECO:0007669"/>
    <property type="project" value="UniProtKB-SubCell"/>
</dbReference>
<dbReference type="GO" id="GO:0043093">
    <property type="term" value="P:FtsZ-dependent cytokinesis"/>
    <property type="evidence" value="ECO:0007669"/>
    <property type="project" value="UniProtKB-UniRule"/>
</dbReference>
<dbReference type="HAMAP" id="MF_00599">
    <property type="entry name" value="FtsB"/>
    <property type="match status" value="1"/>
</dbReference>
<dbReference type="InterPro" id="IPR023081">
    <property type="entry name" value="Cell_div_FtsB"/>
</dbReference>
<dbReference type="InterPro" id="IPR007060">
    <property type="entry name" value="FtsL/DivIC"/>
</dbReference>
<dbReference type="NCBIfam" id="NF002058">
    <property type="entry name" value="PRK00888.1"/>
    <property type="match status" value="1"/>
</dbReference>
<dbReference type="PANTHER" id="PTHR37485">
    <property type="entry name" value="CELL DIVISION PROTEIN FTSB"/>
    <property type="match status" value="1"/>
</dbReference>
<dbReference type="PANTHER" id="PTHR37485:SF1">
    <property type="entry name" value="CELL DIVISION PROTEIN FTSB"/>
    <property type="match status" value="1"/>
</dbReference>
<dbReference type="Pfam" id="PF04977">
    <property type="entry name" value="DivIC"/>
    <property type="match status" value="1"/>
</dbReference>
<organism>
    <name type="scientific">Shewanella sp. (strain MR-4)</name>
    <dbReference type="NCBI Taxonomy" id="60480"/>
    <lineage>
        <taxon>Bacteria</taxon>
        <taxon>Pseudomonadati</taxon>
        <taxon>Pseudomonadota</taxon>
        <taxon>Gammaproteobacteria</taxon>
        <taxon>Alteromonadales</taxon>
        <taxon>Shewanellaceae</taxon>
        <taxon>Shewanella</taxon>
    </lineage>
</organism>
<gene>
    <name evidence="1" type="primary">ftsB</name>
    <name type="ordered locus">Shewmr4_1116</name>
</gene>
<sequence length="99" mass="11189">MKFFVIALIVLLGLLQYRLWSGDNSLPEYFVLQKQIAAQQDGNAKLNERNQVLKEEIIDLKSGTEAIEERARNELGMVKEGETFYRVVGGDRSVSSPSQ</sequence>
<reference key="1">
    <citation type="submission" date="2006-08" db="EMBL/GenBank/DDBJ databases">
        <title>Complete sequence of Shewanella sp. MR-4.</title>
        <authorList>
            <consortium name="US DOE Joint Genome Institute"/>
            <person name="Copeland A."/>
            <person name="Lucas S."/>
            <person name="Lapidus A."/>
            <person name="Barry K."/>
            <person name="Detter J.C."/>
            <person name="Glavina del Rio T."/>
            <person name="Hammon N."/>
            <person name="Israni S."/>
            <person name="Dalin E."/>
            <person name="Tice H."/>
            <person name="Pitluck S."/>
            <person name="Kiss H."/>
            <person name="Brettin T."/>
            <person name="Bruce D."/>
            <person name="Han C."/>
            <person name="Tapia R."/>
            <person name="Gilna P."/>
            <person name="Schmutz J."/>
            <person name="Larimer F."/>
            <person name="Land M."/>
            <person name="Hauser L."/>
            <person name="Kyrpides N."/>
            <person name="Mikhailova N."/>
            <person name="Nealson K."/>
            <person name="Konstantinidis K."/>
            <person name="Klappenbach J."/>
            <person name="Tiedje J."/>
            <person name="Richardson P."/>
        </authorList>
    </citation>
    <scope>NUCLEOTIDE SEQUENCE [LARGE SCALE GENOMIC DNA]</scope>
    <source>
        <strain>MR-4</strain>
    </source>
</reference>
<name>FTSB_SHESM</name>
<evidence type="ECO:0000255" key="1">
    <source>
        <dbReference type="HAMAP-Rule" id="MF_00599"/>
    </source>
</evidence>
<proteinExistence type="inferred from homology"/>
<keyword id="KW-0131">Cell cycle</keyword>
<keyword id="KW-0132">Cell division</keyword>
<keyword id="KW-0997">Cell inner membrane</keyword>
<keyword id="KW-1003">Cell membrane</keyword>
<keyword id="KW-0175">Coiled coil</keyword>
<keyword id="KW-0472">Membrane</keyword>
<keyword id="KW-0812">Transmembrane</keyword>
<keyword id="KW-1133">Transmembrane helix</keyword>
<comment type="function">
    <text evidence="1">Essential cell division protein. May link together the upstream cell division proteins, which are predominantly cytoplasmic, with the downstream cell division proteins, which are predominantly periplasmic.</text>
</comment>
<comment type="subunit">
    <text evidence="1">Part of a complex composed of FtsB, FtsL and FtsQ.</text>
</comment>
<comment type="subcellular location">
    <subcellularLocation>
        <location evidence="1">Cell inner membrane</location>
        <topology evidence="1">Single-pass type II membrane protein</topology>
    </subcellularLocation>
    <text evidence="1">Localizes to the division septum.</text>
</comment>
<comment type="similarity">
    <text evidence="1">Belongs to the FtsB family.</text>
</comment>
<accession>Q0HL71</accession>